<name>ISPF_BRAHW</name>
<reference key="1">
    <citation type="journal article" date="2009" name="PLoS ONE">
        <title>Genome sequence of the pathogenic intestinal spirochete Brachyspira hyodysenteriae reveals adaptations to its lifestyle in the porcine large intestine.</title>
        <authorList>
            <person name="Bellgard M.I."/>
            <person name="Wanchanthuek P."/>
            <person name="La T."/>
            <person name="Ryan K."/>
            <person name="Moolhuijzen P."/>
            <person name="Albertyn Z."/>
            <person name="Shaban B."/>
            <person name="Motro Y."/>
            <person name="Dunn D.S."/>
            <person name="Schibeci D."/>
            <person name="Hunter A."/>
            <person name="Barrero R."/>
            <person name="Phillips N.D."/>
            <person name="Hampson D.J."/>
        </authorList>
    </citation>
    <scope>NUCLEOTIDE SEQUENCE [LARGE SCALE GENOMIC DNA]</scope>
    <source>
        <strain>ATCC 49526 / WA1</strain>
    </source>
</reference>
<proteinExistence type="inferred from homology"/>
<sequence length="158" mass="17489">MRIGYGYDSHAFAENRKLILSGIEIPYELGLKGHSDADAVIHALIDSILGALALGDIGSHFPDNDSKYKGISSIVLLEKTVSIMEEKNYEISNTDITIILEKPKLRNYIDTMRENLSKILKTDIENVSIKAKTNEKMDSIGRGEGIAVHCVSLLKKTK</sequence>
<feature type="chain" id="PRO_1000118996" description="2-C-methyl-D-erythritol 2,4-cyclodiphosphate synthase">
    <location>
        <begin position="1"/>
        <end position="158"/>
    </location>
</feature>
<feature type="binding site" evidence="1">
    <location>
        <begin position="8"/>
        <end position="10"/>
    </location>
    <ligand>
        <name>4-CDP-2-C-methyl-D-erythritol 2-phosphate</name>
        <dbReference type="ChEBI" id="CHEBI:57919"/>
    </ligand>
</feature>
<feature type="binding site" evidence="1">
    <location>
        <position position="8"/>
    </location>
    <ligand>
        <name>a divalent metal cation</name>
        <dbReference type="ChEBI" id="CHEBI:60240"/>
    </ligand>
</feature>
<feature type="binding site" evidence="1">
    <location>
        <position position="10"/>
    </location>
    <ligand>
        <name>a divalent metal cation</name>
        <dbReference type="ChEBI" id="CHEBI:60240"/>
    </ligand>
</feature>
<feature type="binding site" evidence="1">
    <location>
        <begin position="34"/>
        <end position="35"/>
    </location>
    <ligand>
        <name>4-CDP-2-C-methyl-D-erythritol 2-phosphate</name>
        <dbReference type="ChEBI" id="CHEBI:57919"/>
    </ligand>
</feature>
<feature type="binding site" evidence="1">
    <location>
        <position position="42"/>
    </location>
    <ligand>
        <name>a divalent metal cation</name>
        <dbReference type="ChEBI" id="CHEBI:60240"/>
    </ligand>
</feature>
<feature type="binding site" evidence="1">
    <location>
        <begin position="56"/>
        <end position="58"/>
    </location>
    <ligand>
        <name>4-CDP-2-C-methyl-D-erythritol 2-phosphate</name>
        <dbReference type="ChEBI" id="CHEBI:57919"/>
    </ligand>
</feature>
<feature type="binding site" evidence="1">
    <location>
        <begin position="61"/>
        <end position="65"/>
    </location>
    <ligand>
        <name>4-CDP-2-C-methyl-D-erythritol 2-phosphate</name>
        <dbReference type="ChEBI" id="CHEBI:57919"/>
    </ligand>
</feature>
<feature type="binding site" evidence="1">
    <location>
        <position position="142"/>
    </location>
    <ligand>
        <name>4-CDP-2-C-methyl-D-erythritol 2-phosphate</name>
        <dbReference type="ChEBI" id="CHEBI:57919"/>
    </ligand>
</feature>
<feature type="site" description="Transition state stabilizer" evidence="1">
    <location>
        <position position="34"/>
    </location>
</feature>
<feature type="site" description="Transition state stabilizer" evidence="1">
    <location>
        <position position="133"/>
    </location>
</feature>
<accession>C0R0Y4</accession>
<organism>
    <name type="scientific">Brachyspira hyodysenteriae (strain ATCC 49526 / WA1)</name>
    <dbReference type="NCBI Taxonomy" id="565034"/>
    <lineage>
        <taxon>Bacteria</taxon>
        <taxon>Pseudomonadati</taxon>
        <taxon>Spirochaetota</taxon>
        <taxon>Spirochaetia</taxon>
        <taxon>Brachyspirales</taxon>
        <taxon>Brachyspiraceae</taxon>
        <taxon>Brachyspira</taxon>
    </lineage>
</organism>
<protein>
    <recommendedName>
        <fullName evidence="1">2-C-methyl-D-erythritol 2,4-cyclodiphosphate synthase</fullName>
        <shortName evidence="1">MECDP-synthase</shortName>
        <shortName evidence="1">MECPP-synthase</shortName>
        <shortName evidence="1">MECPS</shortName>
        <ecNumber evidence="1">4.6.1.12</ecNumber>
    </recommendedName>
</protein>
<comment type="function">
    <text evidence="1">Involved in the biosynthesis of isopentenyl diphosphate (IPP) and dimethylallyl diphosphate (DMAPP), two major building blocks of isoprenoid compounds. Catalyzes the conversion of 4-diphosphocytidyl-2-C-methyl-D-erythritol 2-phosphate (CDP-ME2P) to 2-C-methyl-D-erythritol 2,4-cyclodiphosphate (ME-CPP) with a corresponding release of cytidine 5-monophosphate (CMP).</text>
</comment>
<comment type="catalytic activity">
    <reaction evidence="1">
        <text>4-CDP-2-C-methyl-D-erythritol 2-phosphate = 2-C-methyl-D-erythritol 2,4-cyclic diphosphate + CMP</text>
        <dbReference type="Rhea" id="RHEA:23864"/>
        <dbReference type="ChEBI" id="CHEBI:57919"/>
        <dbReference type="ChEBI" id="CHEBI:58483"/>
        <dbReference type="ChEBI" id="CHEBI:60377"/>
        <dbReference type="EC" id="4.6.1.12"/>
    </reaction>
</comment>
<comment type="cofactor">
    <cofactor evidence="1">
        <name>a divalent metal cation</name>
        <dbReference type="ChEBI" id="CHEBI:60240"/>
    </cofactor>
    <text evidence="1">Binds 1 divalent metal cation per subunit.</text>
</comment>
<comment type="pathway">
    <text evidence="1">Isoprenoid biosynthesis; isopentenyl diphosphate biosynthesis via DXP pathway; isopentenyl diphosphate from 1-deoxy-D-xylulose 5-phosphate: step 4/6.</text>
</comment>
<comment type="subunit">
    <text evidence="1">Homotrimer.</text>
</comment>
<comment type="similarity">
    <text evidence="1">Belongs to the IspF family.</text>
</comment>
<keyword id="KW-0414">Isoprene biosynthesis</keyword>
<keyword id="KW-0456">Lyase</keyword>
<keyword id="KW-0479">Metal-binding</keyword>
<gene>
    <name evidence="1" type="primary">ispF</name>
    <name type="ordered locus">BHWA1_01293</name>
</gene>
<dbReference type="EC" id="4.6.1.12" evidence="1"/>
<dbReference type="EMBL" id="CP001357">
    <property type="protein sequence ID" value="ACN83772.1"/>
    <property type="molecule type" value="Genomic_DNA"/>
</dbReference>
<dbReference type="RefSeq" id="WP_012670818.1">
    <property type="nucleotide sequence ID" value="NC_012225.1"/>
</dbReference>
<dbReference type="SMR" id="C0R0Y4"/>
<dbReference type="STRING" id="565034.BHWA1_01293"/>
<dbReference type="GeneID" id="63962395"/>
<dbReference type="KEGG" id="bhy:BHWA1_01293"/>
<dbReference type="eggNOG" id="COG0245">
    <property type="taxonomic scope" value="Bacteria"/>
</dbReference>
<dbReference type="HOGENOM" id="CLU_084630_2_0_12"/>
<dbReference type="UniPathway" id="UPA00056">
    <property type="reaction ID" value="UER00095"/>
</dbReference>
<dbReference type="Proteomes" id="UP000001803">
    <property type="component" value="Chromosome"/>
</dbReference>
<dbReference type="GO" id="GO:0008685">
    <property type="term" value="F:2-C-methyl-D-erythritol 2,4-cyclodiphosphate synthase activity"/>
    <property type="evidence" value="ECO:0007669"/>
    <property type="project" value="UniProtKB-UniRule"/>
</dbReference>
<dbReference type="GO" id="GO:0046872">
    <property type="term" value="F:metal ion binding"/>
    <property type="evidence" value="ECO:0007669"/>
    <property type="project" value="UniProtKB-KW"/>
</dbReference>
<dbReference type="GO" id="GO:0019288">
    <property type="term" value="P:isopentenyl diphosphate biosynthetic process, methylerythritol 4-phosphate pathway"/>
    <property type="evidence" value="ECO:0007669"/>
    <property type="project" value="UniProtKB-UniRule"/>
</dbReference>
<dbReference type="GO" id="GO:0016114">
    <property type="term" value="P:terpenoid biosynthetic process"/>
    <property type="evidence" value="ECO:0007669"/>
    <property type="project" value="InterPro"/>
</dbReference>
<dbReference type="CDD" id="cd00554">
    <property type="entry name" value="MECDP_synthase"/>
    <property type="match status" value="1"/>
</dbReference>
<dbReference type="FunFam" id="3.30.1330.50:FF:000003">
    <property type="entry name" value="2-C-methyl-D-erythritol 2,4-cyclodiphosphate synthase"/>
    <property type="match status" value="1"/>
</dbReference>
<dbReference type="Gene3D" id="3.30.1330.50">
    <property type="entry name" value="2-C-methyl-D-erythritol 2,4-cyclodiphosphate synthase"/>
    <property type="match status" value="1"/>
</dbReference>
<dbReference type="HAMAP" id="MF_00107">
    <property type="entry name" value="IspF"/>
    <property type="match status" value="1"/>
</dbReference>
<dbReference type="InterPro" id="IPR003526">
    <property type="entry name" value="MECDP_synthase"/>
</dbReference>
<dbReference type="InterPro" id="IPR020555">
    <property type="entry name" value="MECDP_synthase_CS"/>
</dbReference>
<dbReference type="InterPro" id="IPR036571">
    <property type="entry name" value="MECDP_synthase_sf"/>
</dbReference>
<dbReference type="NCBIfam" id="TIGR00151">
    <property type="entry name" value="ispF"/>
    <property type="match status" value="1"/>
</dbReference>
<dbReference type="PANTHER" id="PTHR43181">
    <property type="entry name" value="2-C-METHYL-D-ERYTHRITOL 2,4-CYCLODIPHOSPHATE SYNTHASE, CHLOROPLASTIC"/>
    <property type="match status" value="1"/>
</dbReference>
<dbReference type="PANTHER" id="PTHR43181:SF1">
    <property type="entry name" value="2-C-METHYL-D-ERYTHRITOL 2,4-CYCLODIPHOSPHATE SYNTHASE, CHLOROPLASTIC"/>
    <property type="match status" value="1"/>
</dbReference>
<dbReference type="Pfam" id="PF02542">
    <property type="entry name" value="YgbB"/>
    <property type="match status" value="1"/>
</dbReference>
<dbReference type="SUPFAM" id="SSF69765">
    <property type="entry name" value="IpsF-like"/>
    <property type="match status" value="1"/>
</dbReference>
<dbReference type="PROSITE" id="PS01350">
    <property type="entry name" value="ISPF"/>
    <property type="match status" value="1"/>
</dbReference>
<evidence type="ECO:0000255" key="1">
    <source>
        <dbReference type="HAMAP-Rule" id="MF_00107"/>
    </source>
</evidence>